<name>COX1_MARPO</name>
<gene>
    <name type="primary">COX1</name>
    <name type="synonym">COXI</name>
</gene>
<geneLocation type="mitochondrion"/>
<feature type="chain" id="PRO_0000183360" description="Cytochrome c oxidase subunit 1">
    <location>
        <begin position="1"/>
        <end position="522"/>
    </location>
</feature>
<feature type="transmembrane region" description="Helical" evidence="3">
    <location>
        <begin position="19"/>
        <end position="39"/>
    </location>
</feature>
<feature type="transmembrane region" description="Helical" evidence="3">
    <location>
        <begin position="67"/>
        <end position="87"/>
    </location>
</feature>
<feature type="transmembrane region" description="Helical" evidence="3">
    <location>
        <begin position="104"/>
        <end position="124"/>
    </location>
</feature>
<feature type="transmembrane region" description="Helical" evidence="3">
    <location>
        <begin position="149"/>
        <end position="169"/>
    </location>
</feature>
<feature type="transmembrane region" description="Helical" evidence="3">
    <location>
        <begin position="187"/>
        <end position="207"/>
    </location>
</feature>
<feature type="transmembrane region" description="Helical" evidence="3">
    <location>
        <begin position="238"/>
        <end position="258"/>
    </location>
</feature>
<feature type="transmembrane region" description="Helical" evidence="3">
    <location>
        <begin position="270"/>
        <end position="290"/>
    </location>
</feature>
<feature type="transmembrane region" description="Helical" evidence="3">
    <location>
        <begin position="313"/>
        <end position="333"/>
    </location>
</feature>
<feature type="transmembrane region" description="Helical" evidence="3">
    <location>
        <begin position="341"/>
        <end position="361"/>
    </location>
</feature>
<feature type="transmembrane region" description="Helical" evidence="3">
    <location>
        <begin position="380"/>
        <end position="400"/>
    </location>
</feature>
<feature type="transmembrane region" description="Helical" evidence="3">
    <location>
        <begin position="417"/>
        <end position="437"/>
    </location>
</feature>
<feature type="transmembrane region" description="Helical" evidence="3">
    <location>
        <begin position="459"/>
        <end position="479"/>
    </location>
</feature>
<feature type="binding site" evidence="2">
    <location>
        <position position="42"/>
    </location>
    <ligand>
        <name>Ca(2+)</name>
        <dbReference type="ChEBI" id="CHEBI:29108"/>
    </ligand>
</feature>
<feature type="binding site" evidence="2">
    <location>
        <position position="47"/>
    </location>
    <ligand>
        <name>Ca(2+)</name>
        <dbReference type="ChEBI" id="CHEBI:29108"/>
    </ligand>
</feature>
<feature type="binding site" description="axial binding residue" evidence="2">
    <location>
        <position position="65"/>
    </location>
    <ligand>
        <name>Fe(II)-heme a</name>
        <dbReference type="ChEBI" id="CHEBI:61715"/>
        <note>low-spin</note>
    </ligand>
    <ligandPart>
        <name>Fe</name>
        <dbReference type="ChEBI" id="CHEBI:18248"/>
    </ligandPart>
</feature>
<feature type="binding site" evidence="2">
    <location>
        <position position="244"/>
    </location>
    <ligand>
        <name>Cu cation</name>
        <dbReference type="ChEBI" id="CHEBI:23378"/>
        <label>B</label>
    </ligand>
</feature>
<feature type="binding site" evidence="1">
    <location>
        <position position="248"/>
    </location>
    <ligand>
        <name>O2</name>
        <dbReference type="ChEBI" id="CHEBI:15379"/>
    </ligand>
</feature>
<feature type="binding site" evidence="2">
    <location>
        <position position="293"/>
    </location>
    <ligand>
        <name>Cu cation</name>
        <dbReference type="ChEBI" id="CHEBI:23378"/>
        <label>B</label>
    </ligand>
</feature>
<feature type="binding site" evidence="2">
    <location>
        <position position="294"/>
    </location>
    <ligand>
        <name>Cu cation</name>
        <dbReference type="ChEBI" id="CHEBI:23378"/>
        <label>B</label>
    </ligand>
</feature>
<feature type="binding site" evidence="2">
    <location>
        <position position="371"/>
    </location>
    <ligand>
        <name>Mg(2+)</name>
        <dbReference type="ChEBI" id="CHEBI:18420"/>
        <note>ligand shared with subunit 2</note>
    </ligand>
</feature>
<feature type="binding site" evidence="2">
    <location>
        <position position="372"/>
    </location>
    <ligand>
        <name>Mg(2+)</name>
        <dbReference type="ChEBI" id="CHEBI:18420"/>
        <note>ligand shared with subunit 2</note>
    </ligand>
</feature>
<feature type="binding site" description="axial binding residue" evidence="2">
    <location>
        <position position="379"/>
    </location>
    <ligand>
        <name>heme a3</name>
        <dbReference type="ChEBI" id="CHEBI:83282"/>
        <note>high-spin</note>
    </ligand>
    <ligandPart>
        <name>Fe</name>
        <dbReference type="ChEBI" id="CHEBI:18248"/>
    </ligandPart>
</feature>
<feature type="binding site" description="axial binding residue" evidence="2">
    <location>
        <position position="381"/>
    </location>
    <ligand>
        <name>Fe(II)-heme a</name>
        <dbReference type="ChEBI" id="CHEBI:61715"/>
        <note>low-spin</note>
    </ligand>
    <ligandPart>
        <name>Fe</name>
        <dbReference type="ChEBI" id="CHEBI:18248"/>
    </ligandPart>
</feature>
<feature type="binding site" evidence="2">
    <location>
        <position position="444"/>
    </location>
    <ligand>
        <name>Ca(2+)</name>
        <dbReference type="ChEBI" id="CHEBI:29108"/>
    </ligand>
</feature>
<feature type="cross-link" description="1'-histidyl-3'-tyrosine (His-Tyr)" evidence="2">
    <location>
        <begin position="244"/>
        <end position="248"/>
    </location>
</feature>
<evidence type="ECO:0000250" key="1">
    <source>
        <dbReference type="UniProtKB" id="P00396"/>
    </source>
</evidence>
<evidence type="ECO:0000250" key="2">
    <source>
        <dbReference type="UniProtKB" id="P00401"/>
    </source>
</evidence>
<evidence type="ECO:0000255" key="3"/>
<evidence type="ECO:0000305" key="4"/>
<comment type="function">
    <text evidence="2">Component of the cytochrome c oxidase, the last enzyme in the mitochondrial electron transport chain which drives oxidative phosphorylation. The respiratory chain contains 3 multisubunit complexes succinate dehydrogenase (complex II, CII), ubiquinol-cytochrome c oxidoreductase (cytochrome b-c1 complex, complex III, CIII) and cytochrome c oxidase (complex IV, CIV), that cooperate to transfer electrons derived from NADH and succinate to molecular oxygen, creating an electrochemical gradient over the inner membrane that drives transmembrane transport and the ATP synthase. Cytochrome c oxidase is the component of the respiratory chain that catalyzes the reduction of oxygen to water. Electrons originating from reduced cytochrome c in the intermembrane space (IMS) are transferred via the dinuclear copper A center (CU(A)) of subunit 2 and heme A of subunit 1 to the active site in subunit 1, a binuclear center (BNC) formed by heme A3 and copper B (CU(B)). The BNC reduces molecular oxygen to 2 water molecules using 4 electrons from cytochrome c in the IMS and 4 protons from the mitochondrial matrix.</text>
</comment>
<comment type="catalytic activity">
    <reaction evidence="2">
        <text>4 Fe(II)-[cytochrome c] + O2 + 8 H(+)(in) = 4 Fe(III)-[cytochrome c] + 2 H2O + 4 H(+)(out)</text>
        <dbReference type="Rhea" id="RHEA:11436"/>
        <dbReference type="Rhea" id="RHEA-COMP:10350"/>
        <dbReference type="Rhea" id="RHEA-COMP:14399"/>
        <dbReference type="ChEBI" id="CHEBI:15377"/>
        <dbReference type="ChEBI" id="CHEBI:15378"/>
        <dbReference type="ChEBI" id="CHEBI:15379"/>
        <dbReference type="ChEBI" id="CHEBI:29033"/>
        <dbReference type="ChEBI" id="CHEBI:29034"/>
        <dbReference type="EC" id="7.1.1.9"/>
    </reaction>
    <physiologicalReaction direction="left-to-right" evidence="2">
        <dbReference type="Rhea" id="RHEA:11437"/>
    </physiologicalReaction>
</comment>
<comment type="cofactor">
    <cofactor evidence="2">
        <name>heme</name>
        <dbReference type="ChEBI" id="CHEBI:30413"/>
    </cofactor>
    <text evidence="2">Binds 2 heme A groups non-covalently per subunit.</text>
</comment>
<comment type="cofactor">
    <cofactor evidence="2">
        <name>Cu cation</name>
        <dbReference type="ChEBI" id="CHEBI:23378"/>
    </cofactor>
    <text evidence="2">Binds a copper B center.</text>
</comment>
<comment type="pathway">
    <text evidence="2">Energy metabolism; oxidative phosphorylation.</text>
</comment>
<comment type="subunit">
    <text evidence="2">Component of the cytochrome c oxidase (complex IV, CIV), a multisubunit enzyme composed of a catalytic core of 3 subunits and several supernumerary subunits. The complex exists as a monomer or a dimer and forms supercomplexes (SCs) in the inner mitochondrial membrane with ubiquinol-cytochrome c oxidoreductase (cytochrome b-c1 complex, complex III, CIII).</text>
</comment>
<comment type="subcellular location">
    <subcellularLocation>
        <location evidence="2">Mitochondrion inner membrane</location>
        <topology evidence="2">Multi-pass membrane protein</topology>
    </subcellularLocation>
</comment>
<comment type="similarity">
    <text evidence="4">Belongs to the heme-copper respiratory oxidase family.</text>
</comment>
<accession>P26856</accession>
<organism>
    <name type="scientific">Marchantia polymorpha</name>
    <name type="common">Common liverwort</name>
    <name type="synonym">Marchantia aquatica</name>
    <dbReference type="NCBI Taxonomy" id="3197"/>
    <lineage>
        <taxon>Eukaryota</taxon>
        <taxon>Viridiplantae</taxon>
        <taxon>Streptophyta</taxon>
        <taxon>Embryophyta</taxon>
        <taxon>Marchantiophyta</taxon>
        <taxon>Marchantiopsida</taxon>
        <taxon>Marchantiidae</taxon>
        <taxon>Marchantiales</taxon>
        <taxon>Marchantiaceae</taxon>
        <taxon>Marchantia</taxon>
    </lineage>
</organism>
<proteinExistence type="inferred from homology"/>
<dbReference type="EC" id="7.1.1.9"/>
<dbReference type="EMBL" id="M68929">
    <property type="protein sequence ID" value="AAC09451.1"/>
    <property type="molecule type" value="Genomic_DNA"/>
</dbReference>
<dbReference type="PIR" id="S25956">
    <property type="entry name" value="S25956"/>
</dbReference>
<dbReference type="RefSeq" id="NP_054454.1">
    <property type="nucleotide sequence ID" value="NC_001660.1"/>
</dbReference>
<dbReference type="SMR" id="P26856"/>
<dbReference type="GeneID" id="2702483"/>
<dbReference type="UniPathway" id="UPA00705"/>
<dbReference type="GO" id="GO:0005743">
    <property type="term" value="C:mitochondrial inner membrane"/>
    <property type="evidence" value="ECO:0007669"/>
    <property type="project" value="UniProtKB-SubCell"/>
</dbReference>
<dbReference type="GO" id="GO:0045277">
    <property type="term" value="C:respiratory chain complex IV"/>
    <property type="evidence" value="ECO:0007669"/>
    <property type="project" value="InterPro"/>
</dbReference>
<dbReference type="GO" id="GO:0004129">
    <property type="term" value="F:cytochrome-c oxidase activity"/>
    <property type="evidence" value="ECO:0007669"/>
    <property type="project" value="UniProtKB-EC"/>
</dbReference>
<dbReference type="GO" id="GO:0020037">
    <property type="term" value="F:heme binding"/>
    <property type="evidence" value="ECO:0007669"/>
    <property type="project" value="InterPro"/>
</dbReference>
<dbReference type="GO" id="GO:0046872">
    <property type="term" value="F:metal ion binding"/>
    <property type="evidence" value="ECO:0007669"/>
    <property type="project" value="UniProtKB-KW"/>
</dbReference>
<dbReference type="GO" id="GO:0015990">
    <property type="term" value="P:electron transport coupled proton transport"/>
    <property type="evidence" value="ECO:0007669"/>
    <property type="project" value="InterPro"/>
</dbReference>
<dbReference type="GO" id="GO:0006119">
    <property type="term" value="P:oxidative phosphorylation"/>
    <property type="evidence" value="ECO:0007669"/>
    <property type="project" value="UniProtKB-UniPathway"/>
</dbReference>
<dbReference type="CDD" id="cd01663">
    <property type="entry name" value="Cyt_c_Oxidase_I"/>
    <property type="match status" value="1"/>
</dbReference>
<dbReference type="FunFam" id="1.20.210.10:FF:000001">
    <property type="entry name" value="Cytochrome c oxidase subunit 1"/>
    <property type="match status" value="1"/>
</dbReference>
<dbReference type="Gene3D" id="1.20.210.10">
    <property type="entry name" value="Cytochrome c oxidase-like, subunit I domain"/>
    <property type="match status" value="1"/>
</dbReference>
<dbReference type="InterPro" id="IPR023616">
    <property type="entry name" value="Cyt_c_oxase-like_su1_dom"/>
</dbReference>
<dbReference type="InterPro" id="IPR036927">
    <property type="entry name" value="Cyt_c_oxase-like_su1_sf"/>
</dbReference>
<dbReference type="InterPro" id="IPR000883">
    <property type="entry name" value="Cyt_C_Oxase_1"/>
</dbReference>
<dbReference type="InterPro" id="IPR023615">
    <property type="entry name" value="Cyt_c_Oxase_su1_BS"/>
</dbReference>
<dbReference type="InterPro" id="IPR033944">
    <property type="entry name" value="Cyt_c_oxase_su1_dom"/>
</dbReference>
<dbReference type="InterPro" id="IPR014241">
    <property type="entry name" value="Cyt_c_oxidase_su1_bac"/>
</dbReference>
<dbReference type="NCBIfam" id="TIGR02891">
    <property type="entry name" value="CtaD_CoxA"/>
    <property type="match status" value="1"/>
</dbReference>
<dbReference type="PANTHER" id="PTHR10422">
    <property type="entry name" value="CYTOCHROME C OXIDASE SUBUNIT 1"/>
    <property type="match status" value="1"/>
</dbReference>
<dbReference type="PANTHER" id="PTHR10422:SF18">
    <property type="entry name" value="CYTOCHROME C OXIDASE SUBUNIT 1"/>
    <property type="match status" value="1"/>
</dbReference>
<dbReference type="Pfam" id="PF00115">
    <property type="entry name" value="COX1"/>
    <property type="match status" value="1"/>
</dbReference>
<dbReference type="PRINTS" id="PR01165">
    <property type="entry name" value="CYCOXIDASEI"/>
</dbReference>
<dbReference type="SUPFAM" id="SSF81442">
    <property type="entry name" value="Cytochrome c oxidase subunit I-like"/>
    <property type="match status" value="1"/>
</dbReference>
<dbReference type="PROSITE" id="PS50855">
    <property type="entry name" value="COX1"/>
    <property type="match status" value="1"/>
</dbReference>
<dbReference type="PROSITE" id="PS00077">
    <property type="entry name" value="COX1_CUB"/>
    <property type="match status" value="1"/>
</dbReference>
<sequence length="522" mass="57552">MNNFAQRWLFSTNHKDIGTLYLIFGAIAGVMGTCFSVLIRMELAQPGNQILGGNHQLYNVLITAHAFLMIFFMVMPAMIGGFGNWFVPILIGSPDMAFPRLNNISFWLLPPSLLLLLSSALVEVGCGSGWTVYPPLSGITSHSGGSVDLAIFSLHLSGVSSILGSINFITTIFNMRAPGLTMHRLPLFVWSVLVTAFLLLLSLPVLAGAITMLLTDRNFNTTFFDPAGGGDPILYQHLFWFFGHPEVYILILPGFGIISHIVSTFSRKPVFGYLGMVYAMISIGVLGFIVWAHHMFTVGLDVDTRAYFTAATMIIAVPTGIKIFSWIATMWGGSIQYKTPMLFAVGFIFLFTVGGLTGIVLANSGVDIALHDTYYVVAHFHYVLSMGAVFALFAGFYYWIGKITGLQYPETLGQIHFWITFFGVNLTFFPMHFLGLAGMPRRIPDYPDAYAGWNAFSSFGSYVSVVGIFCFFVVVFLTLTSENKCAPSPWAVEQNSTTLEWMVPSPPAFHTFEELPAIKESI</sequence>
<reference key="1">
    <citation type="journal article" date="1992" name="J. Mol. Biol.">
        <title>Gene organization deduced from the complete sequence of liverwort Marchantia polymorpha mitochondrial DNA. A primitive form of plant mitochondrial genome.</title>
        <authorList>
            <person name="Oda K."/>
            <person name="Yamato K."/>
            <person name="Ohta E."/>
            <person name="Nakamura Y."/>
            <person name="Takemura M."/>
            <person name="Nozato N."/>
            <person name="Akashi K."/>
            <person name="Kanegae T."/>
            <person name="Ogura Y."/>
            <person name="Kohchi T."/>
            <person name="Ohyama K."/>
        </authorList>
    </citation>
    <scope>NUCLEOTIDE SEQUENCE [GENOMIC DNA]</scope>
</reference>
<keyword id="KW-0106">Calcium</keyword>
<keyword id="KW-0186">Copper</keyword>
<keyword id="KW-0249">Electron transport</keyword>
<keyword id="KW-0349">Heme</keyword>
<keyword id="KW-0408">Iron</keyword>
<keyword id="KW-0460">Magnesium</keyword>
<keyword id="KW-0472">Membrane</keyword>
<keyword id="KW-0479">Metal-binding</keyword>
<keyword id="KW-0496">Mitochondrion</keyword>
<keyword id="KW-0999">Mitochondrion inner membrane</keyword>
<keyword id="KW-0679">Respiratory chain</keyword>
<keyword id="KW-1278">Translocase</keyword>
<keyword id="KW-0812">Transmembrane</keyword>
<keyword id="KW-1133">Transmembrane helix</keyword>
<keyword id="KW-0813">Transport</keyword>
<protein>
    <recommendedName>
        <fullName>Cytochrome c oxidase subunit 1</fullName>
        <ecNumber>7.1.1.9</ecNumber>
    </recommendedName>
    <alternativeName>
        <fullName>Cytochrome c oxidase polypeptide I</fullName>
    </alternativeName>
</protein>